<evidence type="ECO:0000255" key="1"/>
<evidence type="ECO:0000255" key="2">
    <source>
        <dbReference type="PROSITE-ProRule" id="PRU00498"/>
    </source>
</evidence>
<evidence type="ECO:0000256" key="3">
    <source>
        <dbReference type="SAM" id="MobiDB-lite"/>
    </source>
</evidence>
<evidence type="ECO:0000269" key="4">
    <source>
    </source>
</evidence>
<evidence type="ECO:0000303" key="5">
    <source>
    </source>
</evidence>
<evidence type="ECO:0000305" key="6"/>
<evidence type="ECO:0000312" key="7">
    <source>
        <dbReference type="Araport" id="AT5G07190"/>
    </source>
</evidence>
<evidence type="ECO:0000312" key="8">
    <source>
        <dbReference type="EMBL" id="CAB87275.1"/>
    </source>
</evidence>
<reference key="1">
    <citation type="journal article" date="1999" name="Plant Mol. Biol.">
        <title>ATS1 and ATS3: two novel embryo-specific genes in Arabidopsis thaliana.</title>
        <authorList>
            <person name="Nuccio M.L."/>
            <person name="Thomas T.L."/>
        </authorList>
    </citation>
    <scope>NUCLEOTIDE SEQUENCE [GENOMIC DNA]</scope>
    <scope>TISSUE SPECIFICITY</scope>
    <scope>DEVELOPMENTAL STAGE</scope>
    <source>
        <strain>cv. Landsberg erecta</strain>
    </source>
</reference>
<reference key="2">
    <citation type="journal article" date="2000" name="Nature">
        <title>Sequence and analysis of chromosome 5 of the plant Arabidopsis thaliana.</title>
        <authorList>
            <person name="Tabata S."/>
            <person name="Kaneko T."/>
            <person name="Nakamura Y."/>
            <person name="Kotani H."/>
            <person name="Kato T."/>
            <person name="Asamizu E."/>
            <person name="Miyajima N."/>
            <person name="Sasamoto S."/>
            <person name="Kimura T."/>
            <person name="Hosouchi T."/>
            <person name="Kawashima K."/>
            <person name="Kohara M."/>
            <person name="Matsumoto M."/>
            <person name="Matsuno A."/>
            <person name="Muraki A."/>
            <person name="Nakayama S."/>
            <person name="Nakazaki N."/>
            <person name="Naruo K."/>
            <person name="Okumura S."/>
            <person name="Shinpo S."/>
            <person name="Takeuchi C."/>
            <person name="Wada T."/>
            <person name="Watanabe A."/>
            <person name="Yamada M."/>
            <person name="Yasuda M."/>
            <person name="Sato S."/>
            <person name="de la Bastide M."/>
            <person name="Huang E."/>
            <person name="Spiegel L."/>
            <person name="Gnoj L."/>
            <person name="O'Shaughnessy A."/>
            <person name="Preston R."/>
            <person name="Habermann K."/>
            <person name="Murray J."/>
            <person name="Johnson D."/>
            <person name="Rohlfing T."/>
            <person name="Nelson J."/>
            <person name="Stoneking T."/>
            <person name="Pepin K."/>
            <person name="Spieth J."/>
            <person name="Sekhon M."/>
            <person name="Armstrong J."/>
            <person name="Becker M."/>
            <person name="Belter E."/>
            <person name="Cordum H."/>
            <person name="Cordes M."/>
            <person name="Courtney L."/>
            <person name="Courtney W."/>
            <person name="Dante M."/>
            <person name="Du H."/>
            <person name="Edwards J."/>
            <person name="Fryman J."/>
            <person name="Haakensen B."/>
            <person name="Lamar E."/>
            <person name="Latreille P."/>
            <person name="Leonard S."/>
            <person name="Meyer R."/>
            <person name="Mulvaney E."/>
            <person name="Ozersky P."/>
            <person name="Riley A."/>
            <person name="Strowmatt C."/>
            <person name="Wagner-McPherson C."/>
            <person name="Wollam A."/>
            <person name="Yoakum M."/>
            <person name="Bell M."/>
            <person name="Dedhia N."/>
            <person name="Parnell L."/>
            <person name="Shah R."/>
            <person name="Rodriguez M."/>
            <person name="Hoon See L."/>
            <person name="Vil D."/>
            <person name="Baker J."/>
            <person name="Kirchoff K."/>
            <person name="Toth K."/>
            <person name="King L."/>
            <person name="Bahret A."/>
            <person name="Miller B."/>
            <person name="Marra M.A."/>
            <person name="Martienssen R."/>
            <person name="McCombie W.R."/>
            <person name="Wilson R.K."/>
            <person name="Murphy G."/>
            <person name="Bancroft I."/>
            <person name="Volckaert G."/>
            <person name="Wambutt R."/>
            <person name="Duesterhoeft A."/>
            <person name="Stiekema W."/>
            <person name="Pohl T."/>
            <person name="Entian K.-D."/>
            <person name="Terryn N."/>
            <person name="Hartley N."/>
            <person name="Bent E."/>
            <person name="Johnson S."/>
            <person name="Langham S.-A."/>
            <person name="McCullagh B."/>
            <person name="Robben J."/>
            <person name="Grymonprez B."/>
            <person name="Zimmermann W."/>
            <person name="Ramsperger U."/>
            <person name="Wedler H."/>
            <person name="Balke K."/>
            <person name="Wedler E."/>
            <person name="Peters S."/>
            <person name="van Staveren M."/>
            <person name="Dirkse W."/>
            <person name="Mooijman P."/>
            <person name="Klein Lankhorst R."/>
            <person name="Weitzenegger T."/>
            <person name="Bothe G."/>
            <person name="Rose M."/>
            <person name="Hauf J."/>
            <person name="Berneiser S."/>
            <person name="Hempel S."/>
            <person name="Feldpausch M."/>
            <person name="Lamberth S."/>
            <person name="Villarroel R."/>
            <person name="Gielen J."/>
            <person name="Ardiles W."/>
            <person name="Bents O."/>
            <person name="Lemcke K."/>
            <person name="Kolesov G."/>
            <person name="Mayer K.F.X."/>
            <person name="Rudd S."/>
            <person name="Schoof H."/>
            <person name="Schueller C."/>
            <person name="Zaccaria P."/>
            <person name="Mewes H.-W."/>
            <person name="Bevan M."/>
            <person name="Fransz P.F."/>
        </authorList>
    </citation>
    <scope>NUCLEOTIDE SEQUENCE [LARGE SCALE GENOMIC DNA]</scope>
    <source>
        <strain>cv. Columbia</strain>
    </source>
</reference>
<reference key="3">
    <citation type="journal article" date="2017" name="Plant J.">
        <title>Araport11: a complete reannotation of the Arabidopsis thaliana reference genome.</title>
        <authorList>
            <person name="Cheng C.Y."/>
            <person name="Krishnakumar V."/>
            <person name="Chan A.P."/>
            <person name="Thibaud-Nissen F."/>
            <person name="Schobel S."/>
            <person name="Town C.D."/>
        </authorList>
    </citation>
    <scope>GENOME REANNOTATION</scope>
    <source>
        <strain>cv. Columbia</strain>
    </source>
</reference>
<reference key="4">
    <citation type="journal article" date="2003" name="Science">
        <title>Empirical analysis of transcriptional activity in the Arabidopsis genome.</title>
        <authorList>
            <person name="Yamada K."/>
            <person name="Lim J."/>
            <person name="Dale J.M."/>
            <person name="Chen H."/>
            <person name="Shinn P."/>
            <person name="Palm C.J."/>
            <person name="Southwick A.M."/>
            <person name="Wu H.C."/>
            <person name="Kim C.J."/>
            <person name="Nguyen M."/>
            <person name="Pham P.K."/>
            <person name="Cheuk R.F."/>
            <person name="Karlin-Newmann G."/>
            <person name="Liu S.X."/>
            <person name="Lam B."/>
            <person name="Sakano H."/>
            <person name="Wu T."/>
            <person name="Yu G."/>
            <person name="Miranda M."/>
            <person name="Quach H.L."/>
            <person name="Tripp M."/>
            <person name="Chang C.H."/>
            <person name="Lee J.M."/>
            <person name="Toriumi M.J."/>
            <person name="Chan M.M."/>
            <person name="Tang C.C."/>
            <person name="Onodera C.S."/>
            <person name="Deng J.M."/>
            <person name="Akiyama K."/>
            <person name="Ansari Y."/>
            <person name="Arakawa T."/>
            <person name="Banh J."/>
            <person name="Banno F."/>
            <person name="Bowser L."/>
            <person name="Brooks S.Y."/>
            <person name="Carninci P."/>
            <person name="Chao Q."/>
            <person name="Choy N."/>
            <person name="Enju A."/>
            <person name="Goldsmith A.D."/>
            <person name="Gurjal M."/>
            <person name="Hansen N.F."/>
            <person name="Hayashizaki Y."/>
            <person name="Johnson-Hopson C."/>
            <person name="Hsuan V.W."/>
            <person name="Iida K."/>
            <person name="Karnes M."/>
            <person name="Khan S."/>
            <person name="Koesema E."/>
            <person name="Ishida J."/>
            <person name="Jiang P.X."/>
            <person name="Jones T."/>
            <person name="Kawai J."/>
            <person name="Kamiya A."/>
            <person name="Meyers C."/>
            <person name="Nakajima M."/>
            <person name="Narusaka M."/>
            <person name="Seki M."/>
            <person name="Sakurai T."/>
            <person name="Satou M."/>
            <person name="Tamse R."/>
            <person name="Vaysberg M."/>
            <person name="Wallender E.K."/>
            <person name="Wong C."/>
            <person name="Yamamura Y."/>
            <person name="Yuan S."/>
            <person name="Shinozaki K."/>
            <person name="Davis R.W."/>
            <person name="Theologis A."/>
            <person name="Ecker J.R."/>
        </authorList>
    </citation>
    <scope>NUCLEOTIDE SEQUENCE [LARGE SCALE MRNA]</scope>
    <source>
        <strain>cv. Columbia</strain>
    </source>
</reference>
<organism>
    <name type="scientific">Arabidopsis thaliana</name>
    <name type="common">Mouse-ear cress</name>
    <dbReference type="NCBI Taxonomy" id="3702"/>
    <lineage>
        <taxon>Eukaryota</taxon>
        <taxon>Viridiplantae</taxon>
        <taxon>Streptophyta</taxon>
        <taxon>Embryophyta</taxon>
        <taxon>Tracheophyta</taxon>
        <taxon>Spermatophyta</taxon>
        <taxon>Magnoliopsida</taxon>
        <taxon>eudicotyledons</taxon>
        <taxon>Gunneridae</taxon>
        <taxon>Pentapetalae</taxon>
        <taxon>rosids</taxon>
        <taxon>malvids</taxon>
        <taxon>Brassicales</taxon>
        <taxon>Brassicaceae</taxon>
        <taxon>Camelineae</taxon>
        <taxon>Arabidopsis</taxon>
    </lineage>
</organism>
<gene>
    <name evidence="5" type="primary">ATS3</name>
    <name evidence="7" type="ordered locus">At5g07190</name>
    <name evidence="8" type="ORF">T28J14_130</name>
</gene>
<sequence>MTFPSLSVSFLFFAFIFVTHAFDLSIIQMQQGTCPYTVVVMTSCLSPESTRDQISIVFGDADGNKVYAPKLGGLVRGPGGLGKCSTNTFQVRGQCLNDPICSLYINRNGPDGWVPESIEIYSEGSKSVKFDFSKSVPQLNTWYGHNNCNTTGRPSSPDLPPPHFPPEFPPETPTTPPPPPPRPSAASRLGNGESVFLAFAIATAIAAMVRWSY</sequence>
<comment type="function">
    <text evidence="6">May play a role during embryo development.</text>
</comment>
<comment type="subcellular location">
    <subcellularLocation>
        <location evidence="6">Secreted</location>
    </subcellularLocation>
</comment>
<comment type="alternative products">
    <event type="alternative splicing"/>
    <isoform>
        <id>Q9LYP6-1</id>
        <name>1</name>
        <sequence type="displayed"/>
    </isoform>
    <text evidence="6">A number of isoforms are produced. According to EST sequences.</text>
</comment>
<comment type="tissue specificity">
    <text evidence="4">Expressed in seeds. Expression is restricted to the developing embryo.</text>
</comment>
<comment type="developmental stage">
    <text evidence="4">Expressed from the late torpedo stage to late cotyledon stage in developing embryo.</text>
</comment>
<keyword id="KW-0025">Alternative splicing</keyword>
<keyword id="KW-0325">Glycoprotein</keyword>
<keyword id="KW-1185">Reference proteome</keyword>
<keyword id="KW-0964">Secreted</keyword>
<keyword id="KW-0732">Signal</keyword>
<dbReference type="EMBL" id="AF067858">
    <property type="protein sequence ID" value="AAC27073.1"/>
    <property type="molecule type" value="Genomic_DNA"/>
</dbReference>
<dbReference type="EMBL" id="AL163652">
    <property type="protein sequence ID" value="CAB87275.1"/>
    <property type="molecule type" value="Genomic_DNA"/>
</dbReference>
<dbReference type="EMBL" id="CP002688">
    <property type="protein sequence ID" value="AED91119.1"/>
    <property type="molecule type" value="Genomic_DNA"/>
</dbReference>
<dbReference type="EMBL" id="AF370461">
    <property type="protein sequence ID" value="AAK43838.1"/>
    <property type="molecule type" value="mRNA"/>
</dbReference>
<dbReference type="EMBL" id="AY064694">
    <property type="protein sequence ID" value="AAL47396.1"/>
    <property type="molecule type" value="mRNA"/>
</dbReference>
<dbReference type="PIR" id="T48490">
    <property type="entry name" value="T48490"/>
</dbReference>
<dbReference type="RefSeq" id="NP_196336.1">
    <molecule id="Q9LYP6-1"/>
    <property type="nucleotide sequence ID" value="NM_120801.4"/>
</dbReference>
<dbReference type="SMR" id="Q9LYP6"/>
<dbReference type="FunCoup" id="Q9LYP6">
    <property type="interactions" value="17"/>
</dbReference>
<dbReference type="STRING" id="3702.Q9LYP6"/>
<dbReference type="GlyCosmos" id="Q9LYP6">
    <property type="glycosylation" value="1 site, No reported glycans"/>
</dbReference>
<dbReference type="GlyGen" id="Q9LYP6">
    <property type="glycosylation" value="1 site"/>
</dbReference>
<dbReference type="PaxDb" id="3702-AT5G07190.1"/>
<dbReference type="ProteomicsDB" id="241012">
    <molecule id="Q9LYP6-1"/>
</dbReference>
<dbReference type="EnsemblPlants" id="AT5G07190.1">
    <molecule id="Q9LYP6-1"/>
    <property type="protein sequence ID" value="AT5G07190.1"/>
    <property type="gene ID" value="AT5G07190"/>
</dbReference>
<dbReference type="GeneID" id="830610"/>
<dbReference type="Gramene" id="AT5G07190.1">
    <molecule id="Q9LYP6-1"/>
    <property type="protein sequence ID" value="AT5G07190.1"/>
    <property type="gene ID" value="AT5G07190"/>
</dbReference>
<dbReference type="KEGG" id="ath:AT5G07190"/>
<dbReference type="Araport" id="AT5G07190"/>
<dbReference type="TAIR" id="AT5G07190">
    <property type="gene designation" value="ATS3"/>
</dbReference>
<dbReference type="InParanoid" id="Q9LYP6"/>
<dbReference type="PhylomeDB" id="Q9LYP6"/>
<dbReference type="PRO" id="PR:Q9LYP6"/>
<dbReference type="Proteomes" id="UP000006548">
    <property type="component" value="Chromosome 5"/>
</dbReference>
<dbReference type="ExpressionAtlas" id="Q9LYP6">
    <property type="expression patterns" value="baseline and differential"/>
</dbReference>
<dbReference type="GO" id="GO:0005576">
    <property type="term" value="C:extracellular region"/>
    <property type="evidence" value="ECO:0007669"/>
    <property type="project" value="UniProtKB-SubCell"/>
</dbReference>
<dbReference type="GO" id="GO:0009793">
    <property type="term" value="P:embryo development ending in seed dormancy"/>
    <property type="evidence" value="ECO:0000304"/>
    <property type="project" value="TAIR"/>
</dbReference>
<dbReference type="CDD" id="cd00113">
    <property type="entry name" value="PLAT"/>
    <property type="match status" value="1"/>
</dbReference>
<dbReference type="InterPro" id="IPR010417">
    <property type="entry name" value="Embryo-specific_ATS3"/>
</dbReference>
<dbReference type="InterPro" id="IPR036392">
    <property type="entry name" value="PLAT/LH2_dom_sf"/>
</dbReference>
<dbReference type="PANTHER" id="PTHR31718:SF34">
    <property type="entry name" value="EMBRYO-SPECIFIC PROTEIN ATS3"/>
    <property type="match status" value="1"/>
</dbReference>
<dbReference type="PANTHER" id="PTHR31718">
    <property type="entry name" value="PLAT DOMAIN-CONTAINING PROTEIN"/>
    <property type="match status" value="1"/>
</dbReference>
<dbReference type="Pfam" id="PF06232">
    <property type="entry name" value="ATS3"/>
    <property type="match status" value="1"/>
</dbReference>
<dbReference type="SUPFAM" id="SSF49723">
    <property type="entry name" value="Lipase/lipooxygenase domain (PLAT/LH2 domain)"/>
    <property type="match status" value="1"/>
</dbReference>
<name>ATS3_ARATH</name>
<protein>
    <recommendedName>
        <fullName evidence="6">Embryo-specific protein ATS3</fullName>
    </recommendedName>
    <alternativeName>
        <fullName evidence="6">Protein ARABIDOPSIS THALIANA SEED 3</fullName>
    </alternativeName>
</protein>
<proteinExistence type="evidence at transcript level"/>
<accession>Q9LYP6</accession>
<accession>O81271</accession>
<accession>Q94K23</accession>
<feature type="signal peptide" evidence="1">
    <location>
        <begin position="1"/>
        <end position="21"/>
    </location>
</feature>
<feature type="chain" id="PRO_5008180251" description="Embryo-specific protein ATS3">
    <location>
        <begin position="22"/>
        <end position="213"/>
    </location>
</feature>
<feature type="domain" description="PLAT" evidence="6">
    <location>
        <begin position="34"/>
        <end position="148"/>
    </location>
</feature>
<feature type="region of interest" description="Disordered" evidence="3">
    <location>
        <begin position="147"/>
        <end position="188"/>
    </location>
</feature>
<feature type="compositionally biased region" description="Pro residues" evidence="3">
    <location>
        <begin position="157"/>
        <end position="183"/>
    </location>
</feature>
<feature type="glycosylation site" description="N-linked (GlcNAc...) asparagine" evidence="2">
    <location>
        <position position="149"/>
    </location>
</feature>
<feature type="sequence conflict" description="In Ref. 1; AAC27073." evidence="6" ref="1">
    <original>L</original>
    <variation>S</variation>
    <location>
        <position position="74"/>
    </location>
</feature>
<feature type="sequence conflict" description="In Ref. 4; AAK43838/AAL47396." evidence="6" ref="4">
    <original>A</original>
    <variation>S</variation>
    <location>
        <position position="204"/>
    </location>
</feature>